<sequence length="1997" mass="221925">MSRWLFPWSSSIKTRACRYLLQHYLGHYLEERLSLEQLSLDLYNGSGRLTDIHLDIWSVNELLDSAGAPLEIIDGFIGSISVTIPWSALVTENCTLEVSKLQVTCRPKYRGAAQGTESQSWSSCMTTSMQLAQECLKEQPEEPSEPPQPIEGLEMFAQTIETVLRRIKVTFIDTIVRIENNPGDSNLGTALEIHIKRLDYCDEAVRDSPHTVPVDIHQPPAFIQKILQLSGVSLHYEEFKTSVQTPSPTPENPLESEPVQPSKTPSWPEEPQPAPSPIQQIGSCSGCTELTIKLKQNDLFPGPKLDIDGKIGSVHLFLTPRQISNLQEILDALSISESSAIREKLLKSRPLDLEDLKLIEQDLNQQLQSGPGSLFVPDPELVPFQTIENGDMFYSMAAMTNSMTSIRSANELSDIDLESSMYSDYSSQQIPSLTPGIMLSSPRKYGRTPFSATLPQNLHKLPGKSSHPPSMELLKPEMLLRLTLGGLTVTVPHISTYISPQEDPACPEVARHFFRELGYFKDSAFSGRDFSHLRGQFEKACHLSNIRVTAVAVQLVCEQRVGGGTHQSSVDLSCGRLEILECLRQGESTSRRTKNTEYTKLMTFCSPSTSSRPCAQIHYKRSQKTPTRSSRKKQEIKVSSEILVELEEFQTDIDLGLLDRLGSIFQNGACRESYSQNDLHMTDVPQSSEDMEIRVVASKSHICLQFPVPDLRPSLERRPWAEKAVRKDCLQMEVADLDIHSQSKTGTDEARKIEITFSDLHGVYTDGEKLNVPCIRVSKGADPLAKAGGKKFIFPSILVAILPQSKVSPWYLAQDKIDDIDHPSVESPCELKQPEPSPFSSKRTMFETEEMVIPADPNEMADFQHVTLASSQYTLEITLPRAHVFFPSKEVYESLYNRLCNDLLMWEPVPELGASISDSLLSAEPHTTSNYQQDTFRMCKSAFKLDSDSDDEDSHFYSVDEAARHRRGAQDGQSYFSASVTILKGRITAWTEAKGEGAKKLDDHHGEVVLDVENGCIFSVSKYRGKEDLSYLCIQSESVALYHKATVKDYLAPVSLEIPTFLHPTNLDPTIYLSEEGVSAQLSGARKDRNQKMLSLAVRIDLNLVKNVKEFLVALRLDGATLRHHMALPYQSWHSQILDFLDVVDEPILGYSPPAVITVLHTHLFSCAVDYRPLYLPIRVLITAETFTLSSNIVVDTSTFLLRFILDDSALYLSDKCDAEVTDLRKDYVCVLDVDLLELVITTWKGNASSKLTQPLFELRCSNNVLHIHTCADSCAMLVNLTQYVMNNGDLHCPPKPEPPTEIAGQKLQPPEGPSSLPPCLPAETAQINQGDLTDALIDTGRTGKEQPETAISVDAALLEESPVSVYLFPEEIKSGNKRQTTSPSPPPLTEGRVSQESLGLSDTSGDSELTDTDDFCILDAPGIGVPPKDGEPVVRKLVDSPIAVRDGHFSRPLGSTDLLKPPAKFPVPETRIVLREISVVWHLYGGKDFGSSRPNSARAQSPRSRTSFHNARGSPSRSSVTNRPQNTWRTQGGNGRIHDILMEIQLTKVSFQHESYPEPLADGEEKLHTGDLDELPLARQVFIVQELEIRDRLASSHINKFLYLYTSEKMPRRAHSNMLTIKALHVRPEAGLGGPECYLRMSLMPLRLNIDQDALFFLKDFFTSLASGIQTIVPMELGSEASRLDGPAKSSSDCELEQETSQGSTEDETMSPSSSTDQPIYFREFRFTSEVPIWLDYQGKHVTTEQVGTFAGILIGLAQLNCSELKLKRLYCRHGLLGADKVVSYALNEWLTDIRKNQLPGILGGVGPMHSVVQLFHGVRDLFWLPIEQYRKDGRIIRGLQRGAASFGTSTASAALELSNRLVQAIQATAETVYDILSPTPPVSRCALDVRQSRKLRRGQQPADLREGVAKAYDTVREGVIDTAHTICEVASRGHEQKGLTGAVGGVLRQIPPTVVKPFIVATEATSNLLGGMRNQIRPDAHKEDALKWRADEGQD</sequence>
<dbReference type="EMBL" id="BC123939">
    <property type="protein sequence ID" value="AAI23940.1"/>
    <property type="molecule type" value="mRNA"/>
</dbReference>
<dbReference type="RefSeq" id="NP_001072654.1">
    <property type="nucleotide sequence ID" value="NM_001079186.1"/>
</dbReference>
<dbReference type="FunCoup" id="Q08D51">
    <property type="interactions" value="667"/>
</dbReference>
<dbReference type="STRING" id="8364.ENSXETP00000018558"/>
<dbReference type="DNASU" id="780111"/>
<dbReference type="GeneID" id="780111"/>
<dbReference type="KEGG" id="xtr:780111"/>
<dbReference type="AGR" id="Xenbase:XB-GENE-5818802"/>
<dbReference type="CTD" id="23130"/>
<dbReference type="Xenbase" id="XB-GENE-5818802">
    <property type="gene designation" value="atg2a"/>
</dbReference>
<dbReference type="InParanoid" id="Q08D51"/>
<dbReference type="OMA" id="RPCAQIH"/>
<dbReference type="OrthoDB" id="18982at2759"/>
<dbReference type="Proteomes" id="UP000008143">
    <property type="component" value="Chromosome 4"/>
</dbReference>
<dbReference type="Bgee" id="ENSXETG00000031818">
    <property type="expression patterns" value="Expressed in skeletal muscle tissue and 12 other cell types or tissues"/>
</dbReference>
<dbReference type="GO" id="GO:0005789">
    <property type="term" value="C:endoplasmic reticulum membrane"/>
    <property type="evidence" value="ECO:0007669"/>
    <property type="project" value="UniProtKB-SubCell"/>
</dbReference>
<dbReference type="GO" id="GO:0005811">
    <property type="term" value="C:lipid droplet"/>
    <property type="evidence" value="ECO:0007669"/>
    <property type="project" value="UniProtKB-SubCell"/>
</dbReference>
<dbReference type="GO" id="GO:0044232">
    <property type="term" value="C:organelle membrane contact site"/>
    <property type="evidence" value="ECO:0000250"/>
    <property type="project" value="UniProtKB"/>
</dbReference>
<dbReference type="GO" id="GO:0034045">
    <property type="term" value="C:phagophore assembly site membrane"/>
    <property type="evidence" value="ECO:0007669"/>
    <property type="project" value="UniProtKB-SubCell"/>
</dbReference>
<dbReference type="GO" id="GO:0120013">
    <property type="term" value="F:lipid transfer activity"/>
    <property type="evidence" value="ECO:0000250"/>
    <property type="project" value="UniProtKB"/>
</dbReference>
<dbReference type="GO" id="GO:0000045">
    <property type="term" value="P:autophagosome assembly"/>
    <property type="evidence" value="ECO:0000250"/>
    <property type="project" value="UniProtKB"/>
</dbReference>
<dbReference type="GO" id="GO:2000786">
    <property type="term" value="P:positive regulation of autophagosome assembly"/>
    <property type="evidence" value="ECO:0000250"/>
    <property type="project" value="UniProtKB"/>
</dbReference>
<dbReference type="InterPro" id="IPR026849">
    <property type="entry name" value="ATG2"/>
</dbReference>
<dbReference type="PANTHER" id="PTHR13190">
    <property type="entry name" value="AUTOPHAGY-RELATED 2, ISOFORM A"/>
    <property type="match status" value="1"/>
</dbReference>
<dbReference type="PANTHER" id="PTHR13190:SF21">
    <property type="entry name" value="AUTOPHAGY-RELATED PROTEIN 2 HOMOLOG A"/>
    <property type="match status" value="1"/>
</dbReference>
<dbReference type="Pfam" id="PF13329">
    <property type="entry name" value="ATG2_CAD"/>
    <property type="match status" value="2"/>
</dbReference>
<keyword id="KW-0256">Endoplasmic reticulum</keyword>
<keyword id="KW-0551">Lipid droplet</keyword>
<keyword id="KW-0445">Lipid transport</keyword>
<keyword id="KW-0472">Membrane</keyword>
<keyword id="KW-1185">Reference proteome</keyword>
<keyword id="KW-0813">Transport</keyword>
<evidence type="ECO:0000250" key="1">
    <source>
        <dbReference type="UniProtKB" id="P53855"/>
    </source>
</evidence>
<evidence type="ECO:0000250" key="2">
    <source>
        <dbReference type="UniProtKB" id="Q2TAZ0"/>
    </source>
</evidence>
<evidence type="ECO:0000250" key="3">
    <source>
        <dbReference type="UniProtKB" id="Q96BY7"/>
    </source>
</evidence>
<evidence type="ECO:0000255" key="4"/>
<evidence type="ECO:0000256" key="5">
    <source>
        <dbReference type="SAM" id="MobiDB-lite"/>
    </source>
</evidence>
<evidence type="ECO:0000305" key="6"/>
<gene>
    <name evidence="2" type="primary">atg2a</name>
</gene>
<proteinExistence type="evidence at transcript level"/>
<name>ATG2A_XENTR</name>
<reference key="1">
    <citation type="submission" date="2006-09" db="EMBL/GenBank/DDBJ databases">
        <authorList>
            <consortium name="NIH - Xenopus Gene Collection (XGC) project"/>
        </authorList>
    </citation>
    <scope>NUCLEOTIDE SEQUENCE [LARGE SCALE MRNA]</scope>
    <source>
        <tissue>Testis</tissue>
    </source>
</reference>
<protein>
    <recommendedName>
        <fullName evidence="2">Autophagy-related protein 2 homolog A</fullName>
    </recommendedName>
</protein>
<organism>
    <name type="scientific">Xenopus tropicalis</name>
    <name type="common">Western clawed frog</name>
    <name type="synonym">Silurana tropicalis</name>
    <dbReference type="NCBI Taxonomy" id="8364"/>
    <lineage>
        <taxon>Eukaryota</taxon>
        <taxon>Metazoa</taxon>
        <taxon>Chordata</taxon>
        <taxon>Craniata</taxon>
        <taxon>Vertebrata</taxon>
        <taxon>Euteleostomi</taxon>
        <taxon>Amphibia</taxon>
        <taxon>Batrachia</taxon>
        <taxon>Anura</taxon>
        <taxon>Pipoidea</taxon>
        <taxon>Pipidae</taxon>
        <taxon>Xenopodinae</taxon>
        <taxon>Xenopus</taxon>
        <taxon>Silurana</taxon>
    </lineage>
</organism>
<comment type="function">
    <text evidence="2">Lipid transfer protein involved in autophagosome assembly. Tethers the edge of the isolation membrane (IM) to the endoplasmic reticulum (ER) and mediates direct lipid transfer from ER to IM for IM expansion. Binds to the ER exit site (ERES), which is the membrane source for autophagosome formation, and extracts phospholipids from the membrane source and transfers them to atg9 (atg9a or atg9b) to the IM for membrane expansion. Also regulates lipid droplets morphology and distribution within the cell.</text>
</comment>
<comment type="catalytic activity">
    <reaction evidence="2">
        <text>a 1,2-diacyl-sn-glycero-3-phospho-L-serine(in) = a 1,2-diacyl-sn-glycero-3-phospho-L-serine(out)</text>
        <dbReference type="Rhea" id="RHEA:38663"/>
        <dbReference type="ChEBI" id="CHEBI:57262"/>
    </reaction>
</comment>
<comment type="catalytic activity">
    <reaction evidence="2">
        <text>a 1,2-diacyl-sn-glycero-3-phosphoethanolamine(in) = a 1,2-diacyl-sn-glycero-3-phosphoethanolamine(out)</text>
        <dbReference type="Rhea" id="RHEA:38895"/>
        <dbReference type="ChEBI" id="CHEBI:64612"/>
    </reaction>
</comment>
<comment type="subcellular location">
    <subcellularLocation>
        <location evidence="2">Preautophagosomal structure membrane</location>
        <topology evidence="3">Peripheral membrane protein</topology>
    </subcellularLocation>
    <subcellularLocation>
        <location evidence="3">Lipid droplet</location>
    </subcellularLocation>
    <subcellularLocation>
        <location evidence="2">Endoplasmic reticulum membrane</location>
        <topology evidence="1">Peripheral membrane protein</topology>
    </subcellularLocation>
    <text evidence="2">Localizes to endoplasmic reticulum-autophagosome contact sites.</text>
</comment>
<comment type="domain">
    <text evidence="2">The chorein N-terminal domain mediates lipid transfer activity.</text>
</comment>
<comment type="similarity">
    <text evidence="6">Belongs to the ATG2 family.</text>
</comment>
<accession>Q08D51</accession>
<feature type="chain" id="PRO_0000315236" description="Autophagy-related protein 2 homolog A">
    <location>
        <begin position="1"/>
        <end position="1997"/>
    </location>
</feature>
<feature type="domain" description="Chorein N-terminal" evidence="4">
    <location>
        <begin position="17"/>
        <end position="119"/>
    </location>
</feature>
<feature type="region of interest" description="Disordered" evidence="5">
    <location>
        <begin position="241"/>
        <end position="281"/>
    </location>
</feature>
<feature type="region of interest" description="Disordered" evidence="5">
    <location>
        <begin position="1292"/>
        <end position="1323"/>
    </location>
</feature>
<feature type="region of interest" description="Disordered" evidence="5">
    <location>
        <begin position="1371"/>
        <end position="1414"/>
    </location>
</feature>
<feature type="region of interest" description="Disordered" evidence="5">
    <location>
        <begin position="1492"/>
        <end position="1534"/>
    </location>
</feature>
<feature type="region of interest" description="Disordered" evidence="5">
    <location>
        <begin position="1684"/>
        <end position="1718"/>
    </location>
</feature>
<feature type="compositionally biased region" description="Pro residues" evidence="5">
    <location>
        <begin position="1311"/>
        <end position="1321"/>
    </location>
</feature>
<feature type="compositionally biased region" description="Polar residues" evidence="5">
    <location>
        <begin position="1393"/>
        <end position="1408"/>
    </location>
</feature>
<feature type="compositionally biased region" description="Polar residues" evidence="5">
    <location>
        <begin position="1493"/>
        <end position="1532"/>
    </location>
</feature>
<feature type="compositionally biased region" description="Polar residues" evidence="5">
    <location>
        <begin position="1690"/>
        <end position="1718"/>
    </location>
</feature>